<dbReference type="EMBL" id="CP000673">
    <property type="protein sequence ID" value="EDK32279.1"/>
    <property type="molecule type" value="Genomic_DNA"/>
</dbReference>
<dbReference type="RefSeq" id="WP_011988804.1">
    <property type="nucleotide sequence ID" value="NC_009706.1"/>
</dbReference>
<dbReference type="SMR" id="A5N4P8"/>
<dbReference type="STRING" id="431943.CKL_0225"/>
<dbReference type="KEGG" id="ckl:CKL_0225"/>
<dbReference type="eggNOG" id="COG0088">
    <property type="taxonomic scope" value="Bacteria"/>
</dbReference>
<dbReference type="HOGENOM" id="CLU_041575_5_2_9"/>
<dbReference type="Proteomes" id="UP000002411">
    <property type="component" value="Chromosome"/>
</dbReference>
<dbReference type="GO" id="GO:1990904">
    <property type="term" value="C:ribonucleoprotein complex"/>
    <property type="evidence" value="ECO:0007669"/>
    <property type="project" value="UniProtKB-KW"/>
</dbReference>
<dbReference type="GO" id="GO:0005840">
    <property type="term" value="C:ribosome"/>
    <property type="evidence" value="ECO:0007669"/>
    <property type="project" value="UniProtKB-KW"/>
</dbReference>
<dbReference type="GO" id="GO:0019843">
    <property type="term" value="F:rRNA binding"/>
    <property type="evidence" value="ECO:0007669"/>
    <property type="project" value="UniProtKB-UniRule"/>
</dbReference>
<dbReference type="GO" id="GO:0003735">
    <property type="term" value="F:structural constituent of ribosome"/>
    <property type="evidence" value="ECO:0007669"/>
    <property type="project" value="InterPro"/>
</dbReference>
<dbReference type="GO" id="GO:0006412">
    <property type="term" value="P:translation"/>
    <property type="evidence" value="ECO:0007669"/>
    <property type="project" value="UniProtKB-UniRule"/>
</dbReference>
<dbReference type="Gene3D" id="3.40.1370.10">
    <property type="match status" value="1"/>
</dbReference>
<dbReference type="HAMAP" id="MF_01328_B">
    <property type="entry name" value="Ribosomal_uL4_B"/>
    <property type="match status" value="1"/>
</dbReference>
<dbReference type="InterPro" id="IPR002136">
    <property type="entry name" value="Ribosomal_uL4"/>
</dbReference>
<dbReference type="InterPro" id="IPR013005">
    <property type="entry name" value="Ribosomal_uL4-like"/>
</dbReference>
<dbReference type="InterPro" id="IPR023574">
    <property type="entry name" value="Ribosomal_uL4_dom_sf"/>
</dbReference>
<dbReference type="NCBIfam" id="TIGR03953">
    <property type="entry name" value="rplD_bact"/>
    <property type="match status" value="1"/>
</dbReference>
<dbReference type="PANTHER" id="PTHR10746">
    <property type="entry name" value="50S RIBOSOMAL PROTEIN L4"/>
    <property type="match status" value="1"/>
</dbReference>
<dbReference type="PANTHER" id="PTHR10746:SF6">
    <property type="entry name" value="LARGE RIBOSOMAL SUBUNIT PROTEIN UL4M"/>
    <property type="match status" value="1"/>
</dbReference>
<dbReference type="Pfam" id="PF00573">
    <property type="entry name" value="Ribosomal_L4"/>
    <property type="match status" value="1"/>
</dbReference>
<dbReference type="SUPFAM" id="SSF52166">
    <property type="entry name" value="Ribosomal protein L4"/>
    <property type="match status" value="1"/>
</dbReference>
<accession>A5N4P8</accession>
<organism>
    <name type="scientific">Clostridium kluyveri (strain ATCC 8527 / DSM 555 / NBRC 12016 / NCIMB 10680 / K1)</name>
    <dbReference type="NCBI Taxonomy" id="431943"/>
    <lineage>
        <taxon>Bacteria</taxon>
        <taxon>Bacillati</taxon>
        <taxon>Bacillota</taxon>
        <taxon>Clostridia</taxon>
        <taxon>Eubacteriales</taxon>
        <taxon>Clostridiaceae</taxon>
        <taxon>Clostridium</taxon>
    </lineage>
</organism>
<reference key="1">
    <citation type="journal article" date="2008" name="Proc. Natl. Acad. Sci. U.S.A.">
        <title>The genome of Clostridium kluyveri, a strict anaerobe with unique metabolic features.</title>
        <authorList>
            <person name="Seedorf H."/>
            <person name="Fricke W.F."/>
            <person name="Veith B."/>
            <person name="Brueggemann H."/>
            <person name="Liesegang H."/>
            <person name="Strittmatter A."/>
            <person name="Miethke M."/>
            <person name="Buckel W."/>
            <person name="Hinderberger J."/>
            <person name="Li F."/>
            <person name="Hagemeier C."/>
            <person name="Thauer R.K."/>
            <person name="Gottschalk G."/>
        </authorList>
    </citation>
    <scope>NUCLEOTIDE SEQUENCE [LARGE SCALE GENOMIC DNA]</scope>
    <source>
        <strain>ATCC 8527 / DSM 555 / NBRC 12016 / NCIMB 10680 / K1</strain>
    </source>
</reference>
<keyword id="KW-1185">Reference proteome</keyword>
<keyword id="KW-0687">Ribonucleoprotein</keyword>
<keyword id="KW-0689">Ribosomal protein</keyword>
<keyword id="KW-0694">RNA-binding</keyword>
<keyword id="KW-0699">rRNA-binding</keyword>
<feature type="chain" id="PRO_1000086513" description="Large ribosomal subunit protein uL4">
    <location>
        <begin position="1"/>
        <end position="206"/>
    </location>
</feature>
<feature type="region of interest" description="Disordered" evidence="2">
    <location>
        <begin position="51"/>
        <end position="76"/>
    </location>
</feature>
<sequence length="206" mass="22870">MPIVGLFNKEGQKITDFELSDKVFGVEVNQYVMHQVVVALLANKRQGTQSAKTRAEVSGGGIKPWRQKGTGRARQGSIRSPQWIHGGVVFAVKPRSYRISVPKSARRLAMKSALSSKVEENQIVVLESLEMDTPKTKEVVKILDAFEAKKTLIVTAESNQNVYKSARNIQGVSVIPVNNLNVYDLLKFDKLIITKDAVSKIEEVYA</sequence>
<name>RL4_CLOK5</name>
<protein>
    <recommendedName>
        <fullName evidence="1">Large ribosomal subunit protein uL4</fullName>
    </recommendedName>
    <alternativeName>
        <fullName evidence="3">50S ribosomal protein L4</fullName>
    </alternativeName>
</protein>
<proteinExistence type="inferred from homology"/>
<evidence type="ECO:0000255" key="1">
    <source>
        <dbReference type="HAMAP-Rule" id="MF_01328"/>
    </source>
</evidence>
<evidence type="ECO:0000256" key="2">
    <source>
        <dbReference type="SAM" id="MobiDB-lite"/>
    </source>
</evidence>
<evidence type="ECO:0000305" key="3"/>
<gene>
    <name evidence="1" type="primary">rplD</name>
    <name type="ordered locus">CKL_0225</name>
</gene>
<comment type="function">
    <text evidence="1">One of the primary rRNA binding proteins, this protein initially binds near the 5'-end of the 23S rRNA. It is important during the early stages of 50S assembly. It makes multiple contacts with different domains of the 23S rRNA in the assembled 50S subunit and ribosome.</text>
</comment>
<comment type="function">
    <text evidence="1">Forms part of the polypeptide exit tunnel.</text>
</comment>
<comment type="subunit">
    <text evidence="1">Part of the 50S ribosomal subunit.</text>
</comment>
<comment type="similarity">
    <text evidence="1">Belongs to the universal ribosomal protein uL4 family.</text>
</comment>